<sequence length="705" mass="75702">MGKTFNLTRREDGIAILTMDVPGETMNTLKAEFGPEISEILSEIKRDSSIRGLVLISGKKDSFVAGADISMLDACQTAGDAKALSQQGHVVFNELEALNIPVVAAIHGACLGGGLELALACHQRVCSDDGKTMLGVPEVQLGLLPGGGGTQRLPRLVGITTALDMMLTGKQIRPKQALKMGLVNDVVPQTILLQTAVEMALAGKQIAKPVKKSLVNQLLEGTGFGRNIIFDQAAKQVAKKTQGNYPAPAKIIDCVRQGIAKGMQKGLEVEASHFAELVVSKESEALRSIFFATTEMKKETGAEGATPRKVKKAVILGGGLMGGGIASVTTTKAKIPARVKDINEKGLSNALSYAYKLLDKGVKRRHMTPAARDNLMALMTTTTEYKGVKDADIVVEAVFEDLALKHQMVKDIERECGEHTIFASNTSSLPIGQIAQAASRPENVIGLHYFSPVEKMPLVEVIAHAKTSPETIATTVAFARKQGKTPIVVQDGAGFYVNRILALYMNEAAQLLLEGQSVEHLDKALVKFGFPVGPITLLDEVGIDVGAKISPILEKELGERFKAPAAFDKLLSDDRKGRKNGKGFYQYGAASKKKAVDETVYGVLGIKPGVDKEMSAVAERCVVQMLNEAVRCLDAGIIASPRDGDIGAIFGIGFPPFLGGPFHYIDTLGADNLVKILERYQTQYGDRFEPCQRLKAMAAEKARFF</sequence>
<feature type="chain" id="PRO_0000109308" description="Fatty acid oxidation complex subunit alpha">
    <location>
        <begin position="1"/>
        <end position="705"/>
    </location>
</feature>
<feature type="region of interest" description="Enoyl-CoA hydratase" evidence="1">
    <location>
        <begin position="1"/>
        <end position="188"/>
    </location>
</feature>
<feature type="region of interest" description="3-hydroxyacyl-CoA dehydrogenase" evidence="1">
    <location>
        <begin position="308"/>
        <end position="705"/>
    </location>
</feature>
<feature type="site" description="Important for catalytic activity" evidence="1">
    <location>
        <position position="116"/>
    </location>
</feature>
<feature type="site" description="Important for catalytic activity" evidence="1">
    <location>
        <position position="138"/>
    </location>
</feature>
<protein>
    <recommendedName>
        <fullName evidence="1">Fatty acid oxidation complex subunit alpha</fullName>
    </recommendedName>
    <domain>
        <recommendedName>
            <fullName evidence="1">Enoyl-CoA hydratase/3-hydroxybutyryl-CoA epimerase</fullName>
            <ecNumber evidence="1">4.2.1.17</ecNumber>
            <ecNumber evidence="1">5.1.2.3</ecNumber>
        </recommendedName>
    </domain>
    <domain>
        <recommendedName>
            <fullName evidence="1">3-hydroxyacyl-CoA dehydrogenase</fullName>
            <ecNumber evidence="1">1.1.1.35</ecNumber>
        </recommendedName>
    </domain>
</protein>
<comment type="function">
    <text evidence="1">Catalyzes the formation of a hydroxyacyl-CoA by addition of water on enoyl-CoA. Also exhibits 3-hydroxyacyl-CoA epimerase and 3-hydroxyacyl-CoA dehydrogenase activities.</text>
</comment>
<comment type="catalytic activity">
    <reaction evidence="1">
        <text>a (3S)-3-hydroxyacyl-CoA = a (2E)-enoyl-CoA + H2O</text>
        <dbReference type="Rhea" id="RHEA:16105"/>
        <dbReference type="ChEBI" id="CHEBI:15377"/>
        <dbReference type="ChEBI" id="CHEBI:57318"/>
        <dbReference type="ChEBI" id="CHEBI:58856"/>
        <dbReference type="EC" id="4.2.1.17"/>
    </reaction>
</comment>
<comment type="catalytic activity">
    <reaction evidence="1">
        <text>a 4-saturated-(3S)-3-hydroxyacyl-CoA = a (3E)-enoyl-CoA + H2O</text>
        <dbReference type="Rhea" id="RHEA:20724"/>
        <dbReference type="ChEBI" id="CHEBI:15377"/>
        <dbReference type="ChEBI" id="CHEBI:58521"/>
        <dbReference type="ChEBI" id="CHEBI:137480"/>
        <dbReference type="EC" id="4.2.1.17"/>
    </reaction>
</comment>
<comment type="catalytic activity">
    <reaction evidence="1">
        <text>a (3S)-3-hydroxyacyl-CoA + NAD(+) = a 3-oxoacyl-CoA + NADH + H(+)</text>
        <dbReference type="Rhea" id="RHEA:22432"/>
        <dbReference type="ChEBI" id="CHEBI:15378"/>
        <dbReference type="ChEBI" id="CHEBI:57318"/>
        <dbReference type="ChEBI" id="CHEBI:57540"/>
        <dbReference type="ChEBI" id="CHEBI:57945"/>
        <dbReference type="ChEBI" id="CHEBI:90726"/>
        <dbReference type="EC" id="1.1.1.35"/>
    </reaction>
</comment>
<comment type="catalytic activity">
    <reaction evidence="1">
        <text>(3S)-3-hydroxybutanoyl-CoA = (3R)-3-hydroxybutanoyl-CoA</text>
        <dbReference type="Rhea" id="RHEA:21760"/>
        <dbReference type="ChEBI" id="CHEBI:57315"/>
        <dbReference type="ChEBI" id="CHEBI:57316"/>
        <dbReference type="EC" id="5.1.2.3"/>
    </reaction>
</comment>
<comment type="pathway">
    <text evidence="1">Lipid metabolism; fatty acid beta-oxidation.</text>
</comment>
<comment type="subunit">
    <text evidence="1">Heterotetramer of two alpha chains (FadJ) and two beta chains (FadI).</text>
</comment>
<comment type="subcellular location">
    <subcellularLocation>
        <location evidence="1">Cytoplasm</location>
    </subcellularLocation>
</comment>
<comment type="similarity">
    <text evidence="1">In the N-terminal section; belongs to the enoyl-CoA hydratase/isomerase family.</text>
</comment>
<comment type="similarity">
    <text evidence="1">In the central section; belongs to the 3-hydroxyacyl-CoA dehydrogenase family.</text>
</comment>
<accession>Q8ECP7</accession>
<gene>
    <name evidence="1" type="primary">fadJ</name>
    <name type="ordered locus">SO_3088</name>
</gene>
<reference key="1">
    <citation type="journal article" date="2002" name="Nat. Biotechnol.">
        <title>Genome sequence of the dissimilatory metal ion-reducing bacterium Shewanella oneidensis.</title>
        <authorList>
            <person name="Heidelberg J.F."/>
            <person name="Paulsen I.T."/>
            <person name="Nelson K.E."/>
            <person name="Gaidos E.J."/>
            <person name="Nelson W.C."/>
            <person name="Read T.D."/>
            <person name="Eisen J.A."/>
            <person name="Seshadri R."/>
            <person name="Ward N.L."/>
            <person name="Methe B.A."/>
            <person name="Clayton R.A."/>
            <person name="Meyer T."/>
            <person name="Tsapin A."/>
            <person name="Scott J."/>
            <person name="Beanan M.J."/>
            <person name="Brinkac L.M."/>
            <person name="Daugherty S.C."/>
            <person name="DeBoy R.T."/>
            <person name="Dodson R.J."/>
            <person name="Durkin A.S."/>
            <person name="Haft D.H."/>
            <person name="Kolonay J.F."/>
            <person name="Madupu R."/>
            <person name="Peterson J.D."/>
            <person name="Umayam L.A."/>
            <person name="White O."/>
            <person name="Wolf A.M."/>
            <person name="Vamathevan J.J."/>
            <person name="Weidman J.F."/>
            <person name="Impraim M."/>
            <person name="Lee K."/>
            <person name="Berry K.J."/>
            <person name="Lee C."/>
            <person name="Mueller J."/>
            <person name="Khouri H.M."/>
            <person name="Gill J."/>
            <person name="Utterback T.R."/>
            <person name="McDonald L.A."/>
            <person name="Feldblyum T.V."/>
            <person name="Smith H.O."/>
            <person name="Venter J.C."/>
            <person name="Nealson K.H."/>
            <person name="Fraser C.M."/>
        </authorList>
    </citation>
    <scope>NUCLEOTIDE SEQUENCE [LARGE SCALE GENOMIC DNA]</scope>
    <source>
        <strain>ATCC 700550 / JCM 31522 / CIP 106686 / LMG 19005 / NCIMB 14063 / MR-1</strain>
    </source>
</reference>
<name>FADJ_SHEON</name>
<organism>
    <name type="scientific">Shewanella oneidensis (strain ATCC 700550 / JCM 31522 / CIP 106686 / LMG 19005 / NCIMB 14063 / MR-1)</name>
    <dbReference type="NCBI Taxonomy" id="211586"/>
    <lineage>
        <taxon>Bacteria</taxon>
        <taxon>Pseudomonadati</taxon>
        <taxon>Pseudomonadota</taxon>
        <taxon>Gammaproteobacteria</taxon>
        <taxon>Alteromonadales</taxon>
        <taxon>Shewanellaceae</taxon>
        <taxon>Shewanella</taxon>
    </lineage>
</organism>
<dbReference type="EC" id="4.2.1.17" evidence="1"/>
<dbReference type="EC" id="5.1.2.3" evidence="1"/>
<dbReference type="EC" id="1.1.1.35" evidence="1"/>
<dbReference type="EMBL" id="AE014299">
    <property type="protein sequence ID" value="AAN56095.2"/>
    <property type="molecule type" value="Genomic_DNA"/>
</dbReference>
<dbReference type="RefSeq" id="NP_718651.2">
    <property type="nucleotide sequence ID" value="NC_004347.2"/>
</dbReference>
<dbReference type="RefSeq" id="WP_011072985.1">
    <property type="nucleotide sequence ID" value="NC_004347.2"/>
</dbReference>
<dbReference type="SMR" id="Q8ECP7"/>
<dbReference type="STRING" id="211586.SO_3088"/>
<dbReference type="PaxDb" id="211586-SO_3088"/>
<dbReference type="KEGG" id="son:SO_3088"/>
<dbReference type="PATRIC" id="fig|211586.12.peg.2984"/>
<dbReference type="eggNOG" id="COG1024">
    <property type="taxonomic scope" value="Bacteria"/>
</dbReference>
<dbReference type="eggNOG" id="COG1250">
    <property type="taxonomic scope" value="Bacteria"/>
</dbReference>
<dbReference type="HOGENOM" id="CLU_009834_16_3_6"/>
<dbReference type="OrthoDB" id="5389341at2"/>
<dbReference type="PhylomeDB" id="Q8ECP7"/>
<dbReference type="BioCyc" id="SONE211586:G1GMP-2859-MONOMER"/>
<dbReference type="UniPathway" id="UPA00659"/>
<dbReference type="Proteomes" id="UP000008186">
    <property type="component" value="Chromosome"/>
</dbReference>
<dbReference type="GO" id="GO:0005737">
    <property type="term" value="C:cytoplasm"/>
    <property type="evidence" value="ECO:0007669"/>
    <property type="project" value="UniProtKB-SubCell"/>
</dbReference>
<dbReference type="GO" id="GO:0008692">
    <property type="term" value="F:3-hydroxybutyryl-CoA epimerase activity"/>
    <property type="evidence" value="ECO:0007669"/>
    <property type="project" value="UniProtKB-UniRule"/>
</dbReference>
<dbReference type="GO" id="GO:0004300">
    <property type="term" value="F:enoyl-CoA hydratase activity"/>
    <property type="evidence" value="ECO:0000318"/>
    <property type="project" value="GO_Central"/>
</dbReference>
<dbReference type="GO" id="GO:0016509">
    <property type="term" value="F:long-chain-3-hydroxyacyl-CoA dehydrogenase activity"/>
    <property type="evidence" value="ECO:0000318"/>
    <property type="project" value="GO_Central"/>
</dbReference>
<dbReference type="GO" id="GO:0070403">
    <property type="term" value="F:NAD+ binding"/>
    <property type="evidence" value="ECO:0007669"/>
    <property type="project" value="InterPro"/>
</dbReference>
<dbReference type="GO" id="GO:0006635">
    <property type="term" value="P:fatty acid beta-oxidation"/>
    <property type="evidence" value="ECO:0000318"/>
    <property type="project" value="GO_Central"/>
</dbReference>
<dbReference type="CDD" id="cd06558">
    <property type="entry name" value="crotonase-like"/>
    <property type="match status" value="1"/>
</dbReference>
<dbReference type="FunFam" id="1.10.1040.50:FF:000003">
    <property type="entry name" value="Fatty acid oxidation complex subunit alpha"/>
    <property type="match status" value="1"/>
</dbReference>
<dbReference type="FunFam" id="3.90.226.10:FF:000011">
    <property type="entry name" value="Fatty acid oxidation complex subunit alpha"/>
    <property type="match status" value="1"/>
</dbReference>
<dbReference type="FunFam" id="3.40.50.720:FF:000009">
    <property type="entry name" value="Fatty oxidation complex, alpha subunit"/>
    <property type="match status" value="1"/>
</dbReference>
<dbReference type="Gene3D" id="1.10.1040.50">
    <property type="match status" value="1"/>
</dbReference>
<dbReference type="Gene3D" id="3.90.226.10">
    <property type="entry name" value="2-enoyl-CoA Hydratase, Chain A, domain 1"/>
    <property type="match status" value="1"/>
</dbReference>
<dbReference type="Gene3D" id="3.40.50.720">
    <property type="entry name" value="NAD(P)-binding Rossmann-like Domain"/>
    <property type="match status" value="1"/>
</dbReference>
<dbReference type="HAMAP" id="MF_01617">
    <property type="entry name" value="FadJ"/>
    <property type="match status" value="1"/>
</dbReference>
<dbReference type="InterPro" id="IPR006176">
    <property type="entry name" value="3-OHacyl-CoA_DH_NAD-bd"/>
</dbReference>
<dbReference type="InterPro" id="IPR006108">
    <property type="entry name" value="3HC_DH_C"/>
</dbReference>
<dbReference type="InterPro" id="IPR008927">
    <property type="entry name" value="6-PGluconate_DH-like_C_sf"/>
</dbReference>
<dbReference type="InterPro" id="IPR029045">
    <property type="entry name" value="ClpP/crotonase-like_dom_sf"/>
</dbReference>
<dbReference type="InterPro" id="IPR001753">
    <property type="entry name" value="Enoyl-CoA_hydra/iso"/>
</dbReference>
<dbReference type="InterPro" id="IPR050136">
    <property type="entry name" value="FA_oxidation_alpha_subunit"/>
</dbReference>
<dbReference type="InterPro" id="IPR012802">
    <property type="entry name" value="FadJ"/>
</dbReference>
<dbReference type="InterPro" id="IPR036291">
    <property type="entry name" value="NAD(P)-bd_dom_sf"/>
</dbReference>
<dbReference type="NCBIfam" id="TIGR02440">
    <property type="entry name" value="FadJ"/>
    <property type="match status" value="1"/>
</dbReference>
<dbReference type="NCBIfam" id="NF008363">
    <property type="entry name" value="PRK11154.1"/>
    <property type="match status" value="1"/>
</dbReference>
<dbReference type="PANTHER" id="PTHR43612">
    <property type="entry name" value="TRIFUNCTIONAL ENZYME SUBUNIT ALPHA"/>
    <property type="match status" value="1"/>
</dbReference>
<dbReference type="PANTHER" id="PTHR43612:SF3">
    <property type="entry name" value="TRIFUNCTIONAL ENZYME SUBUNIT ALPHA, MITOCHONDRIAL"/>
    <property type="match status" value="1"/>
</dbReference>
<dbReference type="Pfam" id="PF00725">
    <property type="entry name" value="3HCDH"/>
    <property type="match status" value="2"/>
</dbReference>
<dbReference type="Pfam" id="PF02737">
    <property type="entry name" value="3HCDH_N"/>
    <property type="match status" value="1"/>
</dbReference>
<dbReference type="Pfam" id="PF00378">
    <property type="entry name" value="ECH_1"/>
    <property type="match status" value="1"/>
</dbReference>
<dbReference type="SUPFAM" id="SSF48179">
    <property type="entry name" value="6-phosphogluconate dehydrogenase C-terminal domain-like"/>
    <property type="match status" value="2"/>
</dbReference>
<dbReference type="SUPFAM" id="SSF52096">
    <property type="entry name" value="ClpP/crotonase"/>
    <property type="match status" value="1"/>
</dbReference>
<dbReference type="SUPFAM" id="SSF51735">
    <property type="entry name" value="NAD(P)-binding Rossmann-fold domains"/>
    <property type="match status" value="1"/>
</dbReference>
<proteinExistence type="inferred from homology"/>
<keyword id="KW-0963">Cytoplasm</keyword>
<keyword id="KW-0276">Fatty acid metabolism</keyword>
<keyword id="KW-0413">Isomerase</keyword>
<keyword id="KW-0442">Lipid degradation</keyword>
<keyword id="KW-0443">Lipid metabolism</keyword>
<keyword id="KW-0456">Lyase</keyword>
<keyword id="KW-0511">Multifunctional enzyme</keyword>
<keyword id="KW-0520">NAD</keyword>
<keyword id="KW-0560">Oxidoreductase</keyword>
<keyword id="KW-1185">Reference proteome</keyword>
<evidence type="ECO:0000255" key="1">
    <source>
        <dbReference type="HAMAP-Rule" id="MF_01617"/>
    </source>
</evidence>